<name>Y1336_HALSA</name>
<sequence length="151" mass="15585">MTGFDADDAAALIQSYVDDHGLLSFLGVSVEDASDGEMRLRIPYHEKLTNHGPGEGDVHGGIAATLIDTAGGLAVRSALPKPVAANVATIDLNVSYLRPARGDLIADASVVRVGSTVGVAEISVVTPADTADAEPTEVAVGRGSFRVFRDD</sequence>
<reference key="1">
    <citation type="journal article" date="1989" name="J. Bacteriol.">
        <title>Tandem arrangement of photolyase and superoxide dismutase genes in Halobacterium halobium.</title>
        <authorList>
            <person name="Takao M."/>
            <person name="Kobayashi T."/>
            <person name="Oikawa A."/>
            <person name="Yasui A."/>
        </authorList>
    </citation>
    <scope>NUCLEOTIDE SEQUENCE [GENOMIC DNA]</scope>
</reference>
<reference key="2">
    <citation type="journal article" date="2000" name="Proc. Natl. Acad. Sci. U.S.A.">
        <title>Genome sequence of Halobacterium species NRC-1.</title>
        <authorList>
            <person name="Ng W.V."/>
            <person name="Kennedy S.P."/>
            <person name="Mahairas G.G."/>
            <person name="Berquist B."/>
            <person name="Pan M."/>
            <person name="Shukla H.D."/>
            <person name="Lasky S.R."/>
            <person name="Baliga N.S."/>
            <person name="Thorsson V."/>
            <person name="Sbrogna J."/>
            <person name="Swartzell S."/>
            <person name="Weir D."/>
            <person name="Hall J."/>
            <person name="Dahl T.A."/>
            <person name="Welti R."/>
            <person name="Goo Y.A."/>
            <person name="Leithauser B."/>
            <person name="Keller K."/>
            <person name="Cruz R."/>
            <person name="Danson M.J."/>
            <person name="Hough D.W."/>
            <person name="Maddocks D.G."/>
            <person name="Jablonski P.E."/>
            <person name="Krebs M.P."/>
            <person name="Angevine C.M."/>
            <person name="Dale H."/>
            <person name="Isenbarger T.A."/>
            <person name="Peck R.F."/>
            <person name="Pohlschroder M."/>
            <person name="Spudich J.L."/>
            <person name="Jung K.-H."/>
            <person name="Alam M."/>
            <person name="Freitas T."/>
            <person name="Hou S."/>
            <person name="Daniels C.J."/>
            <person name="Dennis P.P."/>
            <person name="Omer A.D."/>
            <person name="Ebhardt H."/>
            <person name="Lowe T.M."/>
            <person name="Liang P."/>
            <person name="Riley M."/>
            <person name="Hood L."/>
            <person name="DasSarma S."/>
        </authorList>
    </citation>
    <scope>NUCLEOTIDE SEQUENCE [LARGE SCALE GENOMIC DNA]</scope>
    <source>
        <strain>ATCC 700922 / JCM 11081 / NRC-1</strain>
    </source>
</reference>
<keyword id="KW-0378">Hydrolase</keyword>
<keyword id="KW-1185">Reference proteome</keyword>
<dbReference type="EC" id="3.1.2.-"/>
<dbReference type="EMBL" id="M24544">
    <property type="protein sequence ID" value="AAA72748.1"/>
    <property type="molecule type" value="Genomic_DNA"/>
</dbReference>
<dbReference type="EMBL" id="AE004437">
    <property type="protein sequence ID" value="AAG19672.1"/>
    <property type="molecule type" value="Genomic_DNA"/>
</dbReference>
<dbReference type="PIR" id="A32580">
    <property type="entry name" value="A32580"/>
</dbReference>
<dbReference type="PIR" id="D84288">
    <property type="entry name" value="D84288"/>
</dbReference>
<dbReference type="RefSeq" id="WP_010902968.1">
    <property type="nucleotide sequence ID" value="NC_002607.1"/>
</dbReference>
<dbReference type="SMR" id="P20378"/>
<dbReference type="STRING" id="64091.VNG_1336C"/>
<dbReference type="PaxDb" id="64091-VNG_1336C"/>
<dbReference type="KEGG" id="hal:VNG_1336C"/>
<dbReference type="PATRIC" id="fig|64091.14.peg.1020"/>
<dbReference type="HOGENOM" id="CLU_089876_7_1_2"/>
<dbReference type="InParanoid" id="P20378"/>
<dbReference type="OrthoDB" id="202321at2157"/>
<dbReference type="PhylomeDB" id="P20378"/>
<dbReference type="Proteomes" id="UP000000554">
    <property type="component" value="Chromosome"/>
</dbReference>
<dbReference type="GO" id="GO:0016787">
    <property type="term" value="F:hydrolase activity"/>
    <property type="evidence" value="ECO:0007669"/>
    <property type="project" value="UniProtKB-KW"/>
</dbReference>
<dbReference type="CDD" id="cd03443">
    <property type="entry name" value="PaaI_thioesterase"/>
    <property type="match status" value="1"/>
</dbReference>
<dbReference type="Gene3D" id="3.10.129.10">
    <property type="entry name" value="Hotdog Thioesterase"/>
    <property type="match status" value="1"/>
</dbReference>
<dbReference type="InterPro" id="IPR029069">
    <property type="entry name" value="HotDog_dom_sf"/>
</dbReference>
<dbReference type="InterPro" id="IPR003736">
    <property type="entry name" value="PAAI_dom"/>
</dbReference>
<dbReference type="InterPro" id="IPR006683">
    <property type="entry name" value="Thioestr_dom"/>
</dbReference>
<dbReference type="NCBIfam" id="TIGR00369">
    <property type="entry name" value="unchar_dom_1"/>
    <property type="match status" value="1"/>
</dbReference>
<dbReference type="PANTHER" id="PTHR43240">
    <property type="entry name" value="1,4-DIHYDROXY-2-NAPHTHOYL-COA THIOESTERASE 1"/>
    <property type="match status" value="1"/>
</dbReference>
<dbReference type="PANTHER" id="PTHR43240:SF20">
    <property type="entry name" value="MEDIUM_LONG-CHAIN ACYL-COA THIOESTERASE YIGI"/>
    <property type="match status" value="1"/>
</dbReference>
<dbReference type="Pfam" id="PF03061">
    <property type="entry name" value="4HBT"/>
    <property type="match status" value="1"/>
</dbReference>
<dbReference type="SUPFAM" id="SSF54637">
    <property type="entry name" value="Thioesterase/thiol ester dehydrase-isomerase"/>
    <property type="match status" value="1"/>
</dbReference>
<protein>
    <recommendedName>
        <fullName>Putative esterase VNG_1336C</fullName>
        <ecNumber>3.1.2.-</ecNumber>
    </recommendedName>
</protein>
<comment type="similarity">
    <text evidence="1">Belongs to the thioesterase PaaI family.</text>
</comment>
<organism>
    <name type="scientific">Halobacterium salinarum (strain ATCC 700922 / JCM 11081 / NRC-1)</name>
    <name type="common">Halobacterium halobium</name>
    <dbReference type="NCBI Taxonomy" id="64091"/>
    <lineage>
        <taxon>Archaea</taxon>
        <taxon>Methanobacteriati</taxon>
        <taxon>Methanobacteriota</taxon>
        <taxon>Stenosarchaea group</taxon>
        <taxon>Halobacteria</taxon>
        <taxon>Halobacteriales</taxon>
        <taxon>Halobacteriaceae</taxon>
        <taxon>Halobacterium</taxon>
        <taxon>Halobacterium salinarum NRC-34001</taxon>
    </lineage>
</organism>
<evidence type="ECO:0000305" key="1"/>
<accession>P20378</accession>
<accession>Q9HQ45</accession>
<proteinExistence type="inferred from homology"/>
<feature type="chain" id="PRO_0000156689" description="Putative esterase VNG_1336C">
    <location>
        <begin position="1"/>
        <end position="151"/>
    </location>
</feature>
<gene>
    <name type="ordered locus">VNG_1336C</name>
</gene>